<comment type="function">
    <text evidence="1">Large subunit of the glutamine-dependent carbamoyl phosphate synthetase (CPSase). CPSase catalyzes the formation of carbamoyl phosphate from the ammonia moiety of glutamine, carbonate, and phosphate donated by ATP, constituting the first step of 2 biosynthetic pathways, one leading to arginine and/or urea and the other to pyrimidine nucleotides. The large subunit (synthetase) binds the substrates ammonia (free or transferred from glutamine from the small subunit), hydrogencarbonate and ATP and carries out an ATP-coupled ligase reaction, activating hydrogencarbonate by forming carboxy phosphate which reacts with ammonia to form carbamoyl phosphate.</text>
</comment>
<comment type="catalytic activity">
    <reaction evidence="1">
        <text>hydrogencarbonate + L-glutamine + 2 ATP + H2O = carbamoyl phosphate + L-glutamate + 2 ADP + phosphate + 2 H(+)</text>
        <dbReference type="Rhea" id="RHEA:18633"/>
        <dbReference type="ChEBI" id="CHEBI:15377"/>
        <dbReference type="ChEBI" id="CHEBI:15378"/>
        <dbReference type="ChEBI" id="CHEBI:17544"/>
        <dbReference type="ChEBI" id="CHEBI:29985"/>
        <dbReference type="ChEBI" id="CHEBI:30616"/>
        <dbReference type="ChEBI" id="CHEBI:43474"/>
        <dbReference type="ChEBI" id="CHEBI:58228"/>
        <dbReference type="ChEBI" id="CHEBI:58359"/>
        <dbReference type="ChEBI" id="CHEBI:456216"/>
        <dbReference type="EC" id="6.3.5.5"/>
    </reaction>
</comment>
<comment type="catalytic activity">
    <molecule>Carbamoyl phosphate synthase large chain</molecule>
    <reaction evidence="1">
        <text>hydrogencarbonate + NH4(+) + 2 ATP = carbamoyl phosphate + 2 ADP + phosphate + 2 H(+)</text>
        <dbReference type="Rhea" id="RHEA:18029"/>
        <dbReference type="ChEBI" id="CHEBI:15378"/>
        <dbReference type="ChEBI" id="CHEBI:17544"/>
        <dbReference type="ChEBI" id="CHEBI:28938"/>
        <dbReference type="ChEBI" id="CHEBI:30616"/>
        <dbReference type="ChEBI" id="CHEBI:43474"/>
        <dbReference type="ChEBI" id="CHEBI:58228"/>
        <dbReference type="ChEBI" id="CHEBI:456216"/>
        <dbReference type="EC" id="6.3.4.16"/>
    </reaction>
</comment>
<comment type="cofactor">
    <cofactor evidence="1">
        <name>Mg(2+)</name>
        <dbReference type="ChEBI" id="CHEBI:18420"/>
    </cofactor>
    <cofactor evidence="1">
        <name>Mn(2+)</name>
        <dbReference type="ChEBI" id="CHEBI:29035"/>
    </cofactor>
    <text evidence="1">Binds 4 Mg(2+) or Mn(2+) ions per subunit.</text>
</comment>
<comment type="pathway">
    <text evidence="1">Amino-acid biosynthesis; L-arginine biosynthesis; carbamoyl phosphate from bicarbonate: step 1/1.</text>
</comment>
<comment type="pathway">
    <text evidence="1">Pyrimidine metabolism; UMP biosynthesis via de novo pathway; (S)-dihydroorotate from bicarbonate: step 1/3.</text>
</comment>
<comment type="subunit">
    <text evidence="1">Composed of two chains; the small (or glutamine) chain promotes the hydrolysis of glutamine to ammonia, which is used by the large (or ammonia) chain to synthesize carbamoyl phosphate. Tetramer of heterodimers (alpha,beta)4.</text>
</comment>
<comment type="domain">
    <text evidence="1">The large subunit is composed of 2 ATP-grasp domains that are involved in binding the 2 ATP molecules needed for carbamoyl phosphate synthesis. The N-terminal ATP-grasp domain (referred to as the carboxyphosphate synthetic component) catalyzes the ATP-dependent phosphorylation of hydrogencarbonate to carboxyphosphate and the subsequent nucleophilic attack by ammonia to form a carbamate intermediate. The C-terminal ATP-grasp domain (referred to as the carbamoyl phosphate synthetic component) then catalyzes the phosphorylation of carbamate with the second ATP to form the end product carbamoyl phosphate. The reactive and unstable enzyme intermediates are sequentially channeled from one active site to the next through the interior of the protein over a distance of at least 96 A.</text>
</comment>
<comment type="similarity">
    <text evidence="1">Belongs to the CarB family.</text>
</comment>
<dbReference type="EC" id="6.3.4.16" evidence="1"/>
<dbReference type="EC" id="6.3.5.5" evidence="1"/>
<dbReference type="EMBL" id="AE004439">
    <property type="protein sequence ID" value="AAK03589.1"/>
    <property type="molecule type" value="Genomic_DNA"/>
</dbReference>
<dbReference type="RefSeq" id="WP_005757684.1">
    <property type="nucleotide sequence ID" value="NC_002663.1"/>
</dbReference>
<dbReference type="SMR" id="Q9CKV0"/>
<dbReference type="STRING" id="272843.PM1505"/>
<dbReference type="EnsemblBacteria" id="AAK03589">
    <property type="protein sequence ID" value="AAK03589"/>
    <property type="gene ID" value="PM1505"/>
</dbReference>
<dbReference type="GeneID" id="77206931"/>
<dbReference type="KEGG" id="pmu:PM1505"/>
<dbReference type="HOGENOM" id="CLU_000513_1_0_6"/>
<dbReference type="OrthoDB" id="9804197at2"/>
<dbReference type="UniPathway" id="UPA00068">
    <property type="reaction ID" value="UER00171"/>
</dbReference>
<dbReference type="UniPathway" id="UPA00070">
    <property type="reaction ID" value="UER00115"/>
</dbReference>
<dbReference type="Proteomes" id="UP000000809">
    <property type="component" value="Chromosome"/>
</dbReference>
<dbReference type="GO" id="GO:0005737">
    <property type="term" value="C:cytoplasm"/>
    <property type="evidence" value="ECO:0007669"/>
    <property type="project" value="TreeGrafter"/>
</dbReference>
<dbReference type="GO" id="GO:0005524">
    <property type="term" value="F:ATP binding"/>
    <property type="evidence" value="ECO:0007669"/>
    <property type="project" value="UniProtKB-UniRule"/>
</dbReference>
<dbReference type="GO" id="GO:0004087">
    <property type="term" value="F:carbamoyl-phosphate synthase (ammonia) activity"/>
    <property type="evidence" value="ECO:0007669"/>
    <property type="project" value="RHEA"/>
</dbReference>
<dbReference type="GO" id="GO:0004088">
    <property type="term" value="F:carbamoyl-phosphate synthase (glutamine-hydrolyzing) activity"/>
    <property type="evidence" value="ECO:0007669"/>
    <property type="project" value="UniProtKB-UniRule"/>
</dbReference>
<dbReference type="GO" id="GO:0046872">
    <property type="term" value="F:metal ion binding"/>
    <property type="evidence" value="ECO:0007669"/>
    <property type="project" value="UniProtKB-KW"/>
</dbReference>
<dbReference type="GO" id="GO:0044205">
    <property type="term" value="P:'de novo' UMP biosynthetic process"/>
    <property type="evidence" value="ECO:0007669"/>
    <property type="project" value="UniProtKB-UniRule"/>
</dbReference>
<dbReference type="GO" id="GO:0006541">
    <property type="term" value="P:glutamine metabolic process"/>
    <property type="evidence" value="ECO:0007669"/>
    <property type="project" value="TreeGrafter"/>
</dbReference>
<dbReference type="GO" id="GO:0006526">
    <property type="term" value="P:L-arginine biosynthetic process"/>
    <property type="evidence" value="ECO:0007669"/>
    <property type="project" value="UniProtKB-UniRule"/>
</dbReference>
<dbReference type="CDD" id="cd01424">
    <property type="entry name" value="MGS_CPS_II"/>
    <property type="match status" value="1"/>
</dbReference>
<dbReference type="FunFam" id="1.10.1030.10:FF:000002">
    <property type="entry name" value="Carbamoyl-phosphate synthase large chain"/>
    <property type="match status" value="1"/>
</dbReference>
<dbReference type="FunFam" id="3.30.1490.20:FF:000001">
    <property type="entry name" value="Carbamoyl-phosphate synthase large chain"/>
    <property type="match status" value="1"/>
</dbReference>
<dbReference type="FunFam" id="3.30.470.20:FF:000007">
    <property type="entry name" value="Carbamoyl-phosphate synthase large chain"/>
    <property type="match status" value="1"/>
</dbReference>
<dbReference type="FunFam" id="3.30.470.20:FF:000013">
    <property type="entry name" value="Carbamoyl-phosphate synthase large chain"/>
    <property type="match status" value="1"/>
</dbReference>
<dbReference type="FunFam" id="3.40.50.20:FF:000001">
    <property type="entry name" value="Carbamoyl-phosphate synthase large chain"/>
    <property type="match status" value="1"/>
</dbReference>
<dbReference type="FunFam" id="3.40.50.20:FF:000003">
    <property type="entry name" value="Carbamoyl-phosphate synthase large chain"/>
    <property type="match status" value="1"/>
</dbReference>
<dbReference type="Gene3D" id="3.40.50.20">
    <property type="match status" value="2"/>
</dbReference>
<dbReference type="Gene3D" id="3.30.470.20">
    <property type="entry name" value="ATP-grasp fold, B domain"/>
    <property type="match status" value="2"/>
</dbReference>
<dbReference type="Gene3D" id="1.10.1030.10">
    <property type="entry name" value="Carbamoyl-phosphate synthetase, large subunit oligomerisation domain"/>
    <property type="match status" value="1"/>
</dbReference>
<dbReference type="Gene3D" id="3.40.50.1380">
    <property type="entry name" value="Methylglyoxal synthase-like domain"/>
    <property type="match status" value="1"/>
</dbReference>
<dbReference type="HAMAP" id="MF_01210_A">
    <property type="entry name" value="CPSase_L_chain_A"/>
    <property type="match status" value="1"/>
</dbReference>
<dbReference type="HAMAP" id="MF_01210_B">
    <property type="entry name" value="CPSase_L_chain_B"/>
    <property type="match status" value="1"/>
</dbReference>
<dbReference type="InterPro" id="IPR011761">
    <property type="entry name" value="ATP-grasp"/>
</dbReference>
<dbReference type="InterPro" id="IPR006275">
    <property type="entry name" value="CarbamoylP_synth_lsu"/>
</dbReference>
<dbReference type="InterPro" id="IPR005480">
    <property type="entry name" value="CarbamoylP_synth_lsu_oligo"/>
</dbReference>
<dbReference type="InterPro" id="IPR036897">
    <property type="entry name" value="CarbamoylP_synth_lsu_oligo_sf"/>
</dbReference>
<dbReference type="InterPro" id="IPR005479">
    <property type="entry name" value="CbamoylP_synth_lsu-like_ATP-bd"/>
</dbReference>
<dbReference type="InterPro" id="IPR005483">
    <property type="entry name" value="CbamoylP_synth_lsu_CPSase_dom"/>
</dbReference>
<dbReference type="InterPro" id="IPR011607">
    <property type="entry name" value="MGS-like_dom"/>
</dbReference>
<dbReference type="InterPro" id="IPR036914">
    <property type="entry name" value="MGS-like_dom_sf"/>
</dbReference>
<dbReference type="InterPro" id="IPR033937">
    <property type="entry name" value="MGS_CPS_CarB"/>
</dbReference>
<dbReference type="InterPro" id="IPR016185">
    <property type="entry name" value="PreATP-grasp_dom_sf"/>
</dbReference>
<dbReference type="NCBIfam" id="TIGR01369">
    <property type="entry name" value="CPSaseII_lrg"/>
    <property type="match status" value="1"/>
</dbReference>
<dbReference type="NCBIfam" id="NF003671">
    <property type="entry name" value="PRK05294.1"/>
    <property type="match status" value="1"/>
</dbReference>
<dbReference type="NCBIfam" id="NF009455">
    <property type="entry name" value="PRK12815.1"/>
    <property type="match status" value="1"/>
</dbReference>
<dbReference type="PANTHER" id="PTHR11405:SF53">
    <property type="entry name" value="CARBAMOYL-PHOSPHATE SYNTHASE [AMMONIA], MITOCHONDRIAL"/>
    <property type="match status" value="1"/>
</dbReference>
<dbReference type="PANTHER" id="PTHR11405">
    <property type="entry name" value="CARBAMOYLTRANSFERASE FAMILY MEMBER"/>
    <property type="match status" value="1"/>
</dbReference>
<dbReference type="Pfam" id="PF02786">
    <property type="entry name" value="CPSase_L_D2"/>
    <property type="match status" value="2"/>
</dbReference>
<dbReference type="Pfam" id="PF02787">
    <property type="entry name" value="CPSase_L_D3"/>
    <property type="match status" value="1"/>
</dbReference>
<dbReference type="Pfam" id="PF02142">
    <property type="entry name" value="MGS"/>
    <property type="match status" value="1"/>
</dbReference>
<dbReference type="PRINTS" id="PR00098">
    <property type="entry name" value="CPSASE"/>
</dbReference>
<dbReference type="SMART" id="SM01096">
    <property type="entry name" value="CPSase_L_D3"/>
    <property type="match status" value="1"/>
</dbReference>
<dbReference type="SMART" id="SM00851">
    <property type="entry name" value="MGS"/>
    <property type="match status" value="1"/>
</dbReference>
<dbReference type="SUPFAM" id="SSF48108">
    <property type="entry name" value="Carbamoyl phosphate synthetase, large subunit connection domain"/>
    <property type="match status" value="1"/>
</dbReference>
<dbReference type="SUPFAM" id="SSF56059">
    <property type="entry name" value="Glutathione synthetase ATP-binding domain-like"/>
    <property type="match status" value="2"/>
</dbReference>
<dbReference type="SUPFAM" id="SSF52335">
    <property type="entry name" value="Methylglyoxal synthase-like"/>
    <property type="match status" value="1"/>
</dbReference>
<dbReference type="SUPFAM" id="SSF52440">
    <property type="entry name" value="PreATP-grasp domain"/>
    <property type="match status" value="2"/>
</dbReference>
<dbReference type="PROSITE" id="PS50975">
    <property type="entry name" value="ATP_GRASP"/>
    <property type="match status" value="2"/>
</dbReference>
<dbReference type="PROSITE" id="PS00866">
    <property type="entry name" value="CPSASE_1"/>
    <property type="match status" value="1"/>
</dbReference>
<dbReference type="PROSITE" id="PS00867">
    <property type="entry name" value="CPSASE_2"/>
    <property type="match status" value="2"/>
</dbReference>
<dbReference type="PROSITE" id="PS51855">
    <property type="entry name" value="MGS"/>
    <property type="match status" value="1"/>
</dbReference>
<organism>
    <name type="scientific">Pasteurella multocida (strain Pm70)</name>
    <dbReference type="NCBI Taxonomy" id="272843"/>
    <lineage>
        <taxon>Bacteria</taxon>
        <taxon>Pseudomonadati</taxon>
        <taxon>Pseudomonadota</taxon>
        <taxon>Gammaproteobacteria</taxon>
        <taxon>Pasteurellales</taxon>
        <taxon>Pasteurellaceae</taxon>
        <taxon>Pasteurella</taxon>
    </lineage>
</organism>
<keyword id="KW-0028">Amino-acid biosynthesis</keyword>
<keyword id="KW-0055">Arginine biosynthesis</keyword>
<keyword id="KW-0067">ATP-binding</keyword>
<keyword id="KW-0436">Ligase</keyword>
<keyword id="KW-0460">Magnesium</keyword>
<keyword id="KW-0464">Manganese</keyword>
<keyword id="KW-0479">Metal-binding</keyword>
<keyword id="KW-0547">Nucleotide-binding</keyword>
<keyword id="KW-0665">Pyrimidine biosynthesis</keyword>
<keyword id="KW-1185">Reference proteome</keyword>
<keyword id="KW-0677">Repeat</keyword>
<reference key="1">
    <citation type="journal article" date="2001" name="Proc. Natl. Acad. Sci. U.S.A.">
        <title>Complete genomic sequence of Pasteurella multocida Pm70.</title>
        <authorList>
            <person name="May B.J."/>
            <person name="Zhang Q."/>
            <person name="Li L.L."/>
            <person name="Paustian M.L."/>
            <person name="Whittam T.S."/>
            <person name="Kapur V."/>
        </authorList>
    </citation>
    <scope>NUCLEOTIDE SEQUENCE [LARGE SCALE GENOMIC DNA]</scope>
    <source>
        <strain>Pm70</strain>
    </source>
</reference>
<protein>
    <recommendedName>
        <fullName evidence="1">Carbamoyl phosphate synthase large chain</fullName>
        <ecNumber evidence="1">6.3.4.16</ecNumber>
        <ecNumber evidence="1">6.3.5.5</ecNumber>
    </recommendedName>
    <alternativeName>
        <fullName evidence="1">Carbamoyl phosphate synthetase ammonia chain</fullName>
    </alternativeName>
</protein>
<gene>
    <name evidence="1" type="primary">carB</name>
    <name type="ordered locus">PM1505</name>
</gene>
<sequence length="1068" mass="117232">MPKRTDINTILIIGAGPIVIGQACEFDYSGAQACKALREEGYKVVLVNSNPATIMTDPDMADVTYIEPIEWRTVEKIIEKERPDAILPTMGGQTALNCALDLSKNGVLKKYNVELIGAKEDAIDKAEDRGRFKEAMEKIGLSTPKSFVCHTLEEAWAAQSEVGFPTLIRPSFTMGGSGGGIAYNKDEFYAICERGFDASPTHELLIEQSVLGWKEYEMEVVRDKADNCIIVCSIENFDPMGVHTGDSITVAPAQTLTDKEYQIMRNASIAVLREIGVDTGGSNVQFAINPENGEMIVIEMNPRVSRSSALASKATGFPIAKVAAKLAVGYTLNELRNDITGGLIPASFEPSIDYVVTKVPRFAFEKFPQADDRLTTQMKSVGEVMAMGRTFQESLQKALRGLETGICGFNLMSEEPEKIRQELGNPGPIRILYVADAFGAGFTLDEVHHYSKIDPWFLIQIQDLVLEELALEKRTLDDLDYAELRRLKRKGFSDKRIAQLTKSAESAVRNKRVSLNLHPVYKRVDTCAGEFTSDTAYLYSTYEEECESRPSDKKKIMILGGGPNRIGQGIEFDYCCVHASLALREAGFETIMVNCNPETVSTDFDTSDRLYFEPLTLEDVLEIIHVEKPHGVIVHYGGQTPLKLANDLHANGVNIIGTSADSIDAAEDRERFQQILHKLHLKQPTNRTARNAEEAVKLAEEVGYPLVVRPSYVLGGRAMQIVYNVDELQRYMREAVSVSNDSPILLDHFLNNAIEVDVDCICDGAEVVIGGIMQHIEQAGIHSGDSACSLPPYSLSQEVQDEIRRQTAEMAFALGVKGLMNVQFAVQDGVIYVLEVNPRASRTVPFVSKATGRPLAKIAARVMAGESLKAQGIQGEVIPPFYSVKEAVFPFIKFPGVDTVLGPEMRSTGEVMGVGTTFAEAFLKAQLGANERIPKTGKVFLSVNDADKPRLLPIARQLQESGYGLCATLGTAKFLREHGVAVQIINKVREGRPNIVDAIKNGEIAMVINTVSGLAETVTDGHAIRRSALQQKVFLQTTLAGAEALAGSVEYLADSEVYSLQDLHQRLL</sequence>
<proteinExistence type="inferred from homology"/>
<name>CARB_PASMU</name>
<accession>Q9CKV0</accession>
<evidence type="ECO:0000255" key="1">
    <source>
        <dbReference type="HAMAP-Rule" id="MF_01210"/>
    </source>
</evidence>
<feature type="chain" id="PRO_0000145027" description="Carbamoyl phosphate synthase large chain">
    <location>
        <begin position="1"/>
        <end position="1068"/>
    </location>
</feature>
<feature type="domain" description="ATP-grasp 1" evidence="1">
    <location>
        <begin position="133"/>
        <end position="328"/>
    </location>
</feature>
<feature type="domain" description="ATP-grasp 2" evidence="1">
    <location>
        <begin position="673"/>
        <end position="864"/>
    </location>
</feature>
<feature type="domain" description="MGS-like" evidence="1">
    <location>
        <begin position="931"/>
        <end position="1068"/>
    </location>
</feature>
<feature type="region of interest" description="Carboxyphosphate synthetic domain" evidence="1">
    <location>
        <begin position="1"/>
        <end position="403"/>
    </location>
</feature>
<feature type="region of interest" description="Oligomerization domain" evidence="1">
    <location>
        <begin position="404"/>
        <end position="548"/>
    </location>
</feature>
<feature type="region of interest" description="Carbamoyl phosphate synthetic domain" evidence="1">
    <location>
        <begin position="549"/>
        <end position="930"/>
    </location>
</feature>
<feature type="region of interest" description="Allosteric domain" evidence="1">
    <location>
        <begin position="931"/>
        <end position="1068"/>
    </location>
</feature>
<feature type="binding site" evidence="1">
    <location>
        <position position="129"/>
    </location>
    <ligand>
        <name>ATP</name>
        <dbReference type="ChEBI" id="CHEBI:30616"/>
        <label>1</label>
    </ligand>
</feature>
<feature type="binding site" evidence="1">
    <location>
        <position position="169"/>
    </location>
    <ligand>
        <name>ATP</name>
        <dbReference type="ChEBI" id="CHEBI:30616"/>
        <label>1</label>
    </ligand>
</feature>
<feature type="binding site" evidence="1">
    <location>
        <position position="175"/>
    </location>
    <ligand>
        <name>ATP</name>
        <dbReference type="ChEBI" id="CHEBI:30616"/>
        <label>1</label>
    </ligand>
</feature>
<feature type="binding site" evidence="1">
    <location>
        <position position="176"/>
    </location>
    <ligand>
        <name>ATP</name>
        <dbReference type="ChEBI" id="CHEBI:30616"/>
        <label>1</label>
    </ligand>
</feature>
<feature type="binding site" evidence="1">
    <location>
        <position position="208"/>
    </location>
    <ligand>
        <name>ATP</name>
        <dbReference type="ChEBI" id="CHEBI:30616"/>
        <label>1</label>
    </ligand>
</feature>
<feature type="binding site" evidence="1">
    <location>
        <position position="210"/>
    </location>
    <ligand>
        <name>ATP</name>
        <dbReference type="ChEBI" id="CHEBI:30616"/>
        <label>1</label>
    </ligand>
</feature>
<feature type="binding site" evidence="1">
    <location>
        <position position="215"/>
    </location>
    <ligand>
        <name>ATP</name>
        <dbReference type="ChEBI" id="CHEBI:30616"/>
        <label>1</label>
    </ligand>
</feature>
<feature type="binding site" evidence="1">
    <location>
        <position position="241"/>
    </location>
    <ligand>
        <name>ATP</name>
        <dbReference type="ChEBI" id="CHEBI:30616"/>
        <label>1</label>
    </ligand>
</feature>
<feature type="binding site" evidence="1">
    <location>
        <position position="242"/>
    </location>
    <ligand>
        <name>ATP</name>
        <dbReference type="ChEBI" id="CHEBI:30616"/>
        <label>1</label>
    </ligand>
</feature>
<feature type="binding site" evidence="1">
    <location>
        <position position="243"/>
    </location>
    <ligand>
        <name>ATP</name>
        <dbReference type="ChEBI" id="CHEBI:30616"/>
        <label>1</label>
    </ligand>
</feature>
<feature type="binding site" evidence="1">
    <location>
        <position position="285"/>
    </location>
    <ligand>
        <name>ATP</name>
        <dbReference type="ChEBI" id="CHEBI:30616"/>
        <label>1</label>
    </ligand>
</feature>
<feature type="binding site" evidence="1">
    <location>
        <position position="285"/>
    </location>
    <ligand>
        <name>Mg(2+)</name>
        <dbReference type="ChEBI" id="CHEBI:18420"/>
        <label>1</label>
    </ligand>
</feature>
<feature type="binding site" evidence="1">
    <location>
        <position position="285"/>
    </location>
    <ligand>
        <name>Mn(2+)</name>
        <dbReference type="ChEBI" id="CHEBI:29035"/>
        <label>1</label>
    </ligand>
</feature>
<feature type="binding site" evidence="1">
    <location>
        <position position="299"/>
    </location>
    <ligand>
        <name>ATP</name>
        <dbReference type="ChEBI" id="CHEBI:30616"/>
        <label>1</label>
    </ligand>
</feature>
<feature type="binding site" evidence="1">
    <location>
        <position position="299"/>
    </location>
    <ligand>
        <name>Mg(2+)</name>
        <dbReference type="ChEBI" id="CHEBI:18420"/>
        <label>1</label>
    </ligand>
</feature>
<feature type="binding site" evidence="1">
    <location>
        <position position="299"/>
    </location>
    <ligand>
        <name>Mg(2+)</name>
        <dbReference type="ChEBI" id="CHEBI:18420"/>
        <label>2</label>
    </ligand>
</feature>
<feature type="binding site" evidence="1">
    <location>
        <position position="299"/>
    </location>
    <ligand>
        <name>Mn(2+)</name>
        <dbReference type="ChEBI" id="CHEBI:29035"/>
        <label>1</label>
    </ligand>
</feature>
<feature type="binding site" evidence="1">
    <location>
        <position position="299"/>
    </location>
    <ligand>
        <name>Mn(2+)</name>
        <dbReference type="ChEBI" id="CHEBI:29035"/>
        <label>2</label>
    </ligand>
</feature>
<feature type="binding site" evidence="1">
    <location>
        <position position="301"/>
    </location>
    <ligand>
        <name>Mg(2+)</name>
        <dbReference type="ChEBI" id="CHEBI:18420"/>
        <label>2</label>
    </ligand>
</feature>
<feature type="binding site" evidence="1">
    <location>
        <position position="301"/>
    </location>
    <ligand>
        <name>Mn(2+)</name>
        <dbReference type="ChEBI" id="CHEBI:29035"/>
        <label>2</label>
    </ligand>
</feature>
<feature type="binding site" evidence="1">
    <location>
        <position position="709"/>
    </location>
    <ligand>
        <name>ATP</name>
        <dbReference type="ChEBI" id="CHEBI:30616"/>
        <label>2</label>
    </ligand>
</feature>
<feature type="binding site" evidence="1">
    <location>
        <position position="748"/>
    </location>
    <ligand>
        <name>ATP</name>
        <dbReference type="ChEBI" id="CHEBI:30616"/>
        <label>2</label>
    </ligand>
</feature>
<feature type="binding site" evidence="1">
    <location>
        <position position="750"/>
    </location>
    <ligand>
        <name>ATP</name>
        <dbReference type="ChEBI" id="CHEBI:30616"/>
        <label>2</label>
    </ligand>
</feature>
<feature type="binding site" evidence="1">
    <location>
        <position position="755"/>
    </location>
    <ligand>
        <name>ATP</name>
        <dbReference type="ChEBI" id="CHEBI:30616"/>
        <label>2</label>
    </ligand>
</feature>
<feature type="binding site" evidence="1">
    <location>
        <position position="780"/>
    </location>
    <ligand>
        <name>ATP</name>
        <dbReference type="ChEBI" id="CHEBI:30616"/>
        <label>2</label>
    </ligand>
</feature>
<feature type="binding site" evidence="1">
    <location>
        <position position="781"/>
    </location>
    <ligand>
        <name>ATP</name>
        <dbReference type="ChEBI" id="CHEBI:30616"/>
        <label>2</label>
    </ligand>
</feature>
<feature type="binding site" evidence="1">
    <location>
        <position position="782"/>
    </location>
    <ligand>
        <name>ATP</name>
        <dbReference type="ChEBI" id="CHEBI:30616"/>
        <label>2</label>
    </ligand>
</feature>
<feature type="binding site" evidence="1">
    <location>
        <position position="783"/>
    </location>
    <ligand>
        <name>ATP</name>
        <dbReference type="ChEBI" id="CHEBI:30616"/>
        <label>2</label>
    </ligand>
</feature>
<feature type="binding site" evidence="1">
    <location>
        <position position="823"/>
    </location>
    <ligand>
        <name>ATP</name>
        <dbReference type="ChEBI" id="CHEBI:30616"/>
        <label>2</label>
    </ligand>
</feature>
<feature type="binding site" evidence="1">
    <location>
        <position position="823"/>
    </location>
    <ligand>
        <name>Mg(2+)</name>
        <dbReference type="ChEBI" id="CHEBI:18420"/>
        <label>3</label>
    </ligand>
</feature>
<feature type="binding site" evidence="1">
    <location>
        <position position="823"/>
    </location>
    <ligand>
        <name>Mn(2+)</name>
        <dbReference type="ChEBI" id="CHEBI:29035"/>
        <label>3</label>
    </ligand>
</feature>
<feature type="binding site" evidence="1">
    <location>
        <position position="835"/>
    </location>
    <ligand>
        <name>ATP</name>
        <dbReference type="ChEBI" id="CHEBI:30616"/>
        <label>2</label>
    </ligand>
</feature>
<feature type="binding site" evidence="1">
    <location>
        <position position="835"/>
    </location>
    <ligand>
        <name>Mg(2+)</name>
        <dbReference type="ChEBI" id="CHEBI:18420"/>
        <label>3</label>
    </ligand>
</feature>
<feature type="binding site" evidence="1">
    <location>
        <position position="835"/>
    </location>
    <ligand>
        <name>Mg(2+)</name>
        <dbReference type="ChEBI" id="CHEBI:18420"/>
        <label>4</label>
    </ligand>
</feature>
<feature type="binding site" evidence="1">
    <location>
        <position position="835"/>
    </location>
    <ligand>
        <name>Mn(2+)</name>
        <dbReference type="ChEBI" id="CHEBI:29035"/>
        <label>3</label>
    </ligand>
</feature>
<feature type="binding site" evidence="1">
    <location>
        <position position="835"/>
    </location>
    <ligand>
        <name>Mn(2+)</name>
        <dbReference type="ChEBI" id="CHEBI:29035"/>
        <label>4</label>
    </ligand>
</feature>
<feature type="binding site" evidence="1">
    <location>
        <position position="837"/>
    </location>
    <ligand>
        <name>Mg(2+)</name>
        <dbReference type="ChEBI" id="CHEBI:18420"/>
        <label>4</label>
    </ligand>
</feature>
<feature type="binding site" evidence="1">
    <location>
        <position position="837"/>
    </location>
    <ligand>
        <name>Mn(2+)</name>
        <dbReference type="ChEBI" id="CHEBI:29035"/>
        <label>4</label>
    </ligand>
</feature>